<organism>
    <name type="scientific">Bacillus subtilis (strain 168)</name>
    <dbReference type="NCBI Taxonomy" id="224308"/>
    <lineage>
        <taxon>Bacteria</taxon>
        <taxon>Bacillati</taxon>
        <taxon>Bacillota</taxon>
        <taxon>Bacilli</taxon>
        <taxon>Bacillales</taxon>
        <taxon>Bacillaceae</taxon>
        <taxon>Bacillus</taxon>
    </lineage>
</organism>
<keyword id="KW-1003">Cell membrane</keyword>
<keyword id="KW-0472">Membrane</keyword>
<keyword id="KW-1185">Reference proteome</keyword>
<keyword id="KW-0812">Transmembrane</keyword>
<keyword id="KW-1133">Transmembrane helix</keyword>
<keyword id="KW-0813">Transport</keyword>
<reference key="1">
    <citation type="journal article" date="1995" name="DNA Res.">
        <title>Cloning and sequencing of a 36-kb region of the Bacillus subtilis genome between the gnt and iol operons.</title>
        <authorList>
            <person name="Yoshida K."/>
            <person name="Seki S."/>
            <person name="Fujimura M."/>
            <person name="Miwa Y."/>
            <person name="Fujita Y."/>
        </authorList>
    </citation>
    <scope>NUCLEOTIDE SEQUENCE [GENOMIC DNA]</scope>
    <source>
        <strain>168 / BGSC1A1</strain>
    </source>
</reference>
<reference key="2">
    <citation type="submission" date="1997-07" db="EMBL/GenBank/DDBJ databases">
        <authorList>
            <person name="Fujita Y."/>
            <person name="Shibayama T."/>
            <person name="Ishio I."/>
            <person name="Aoyama D."/>
            <person name="Yoshida K."/>
        </authorList>
    </citation>
    <scope>SEQUENCE REVISION</scope>
</reference>
<reference key="3">
    <citation type="journal article" date="1997" name="Nature">
        <title>The complete genome sequence of the Gram-positive bacterium Bacillus subtilis.</title>
        <authorList>
            <person name="Kunst F."/>
            <person name="Ogasawara N."/>
            <person name="Moszer I."/>
            <person name="Albertini A.M."/>
            <person name="Alloni G."/>
            <person name="Azevedo V."/>
            <person name="Bertero M.G."/>
            <person name="Bessieres P."/>
            <person name="Bolotin A."/>
            <person name="Borchert S."/>
            <person name="Borriss R."/>
            <person name="Boursier L."/>
            <person name="Brans A."/>
            <person name="Braun M."/>
            <person name="Brignell S.C."/>
            <person name="Bron S."/>
            <person name="Brouillet S."/>
            <person name="Bruschi C.V."/>
            <person name="Caldwell B."/>
            <person name="Capuano V."/>
            <person name="Carter N.M."/>
            <person name="Choi S.-K."/>
            <person name="Codani J.-J."/>
            <person name="Connerton I.F."/>
            <person name="Cummings N.J."/>
            <person name="Daniel R.A."/>
            <person name="Denizot F."/>
            <person name="Devine K.M."/>
            <person name="Duesterhoeft A."/>
            <person name="Ehrlich S.D."/>
            <person name="Emmerson P.T."/>
            <person name="Entian K.-D."/>
            <person name="Errington J."/>
            <person name="Fabret C."/>
            <person name="Ferrari E."/>
            <person name="Foulger D."/>
            <person name="Fritz C."/>
            <person name="Fujita M."/>
            <person name="Fujita Y."/>
            <person name="Fuma S."/>
            <person name="Galizzi A."/>
            <person name="Galleron N."/>
            <person name="Ghim S.-Y."/>
            <person name="Glaser P."/>
            <person name="Goffeau A."/>
            <person name="Golightly E.J."/>
            <person name="Grandi G."/>
            <person name="Guiseppi G."/>
            <person name="Guy B.J."/>
            <person name="Haga K."/>
            <person name="Haiech J."/>
            <person name="Harwood C.R."/>
            <person name="Henaut A."/>
            <person name="Hilbert H."/>
            <person name="Holsappel S."/>
            <person name="Hosono S."/>
            <person name="Hullo M.-F."/>
            <person name="Itaya M."/>
            <person name="Jones L.-M."/>
            <person name="Joris B."/>
            <person name="Karamata D."/>
            <person name="Kasahara Y."/>
            <person name="Klaerr-Blanchard M."/>
            <person name="Klein C."/>
            <person name="Kobayashi Y."/>
            <person name="Koetter P."/>
            <person name="Koningstein G."/>
            <person name="Krogh S."/>
            <person name="Kumano M."/>
            <person name="Kurita K."/>
            <person name="Lapidus A."/>
            <person name="Lardinois S."/>
            <person name="Lauber J."/>
            <person name="Lazarevic V."/>
            <person name="Lee S.-M."/>
            <person name="Levine A."/>
            <person name="Liu H."/>
            <person name="Masuda S."/>
            <person name="Mauel C."/>
            <person name="Medigue C."/>
            <person name="Medina N."/>
            <person name="Mellado R.P."/>
            <person name="Mizuno M."/>
            <person name="Moestl D."/>
            <person name="Nakai S."/>
            <person name="Noback M."/>
            <person name="Noone D."/>
            <person name="O'Reilly M."/>
            <person name="Ogawa K."/>
            <person name="Ogiwara A."/>
            <person name="Oudega B."/>
            <person name="Park S.-H."/>
            <person name="Parro V."/>
            <person name="Pohl T.M."/>
            <person name="Portetelle D."/>
            <person name="Porwollik S."/>
            <person name="Prescott A.M."/>
            <person name="Presecan E."/>
            <person name="Pujic P."/>
            <person name="Purnelle B."/>
            <person name="Rapoport G."/>
            <person name="Rey M."/>
            <person name="Reynolds S."/>
            <person name="Rieger M."/>
            <person name="Rivolta C."/>
            <person name="Rocha E."/>
            <person name="Roche B."/>
            <person name="Rose M."/>
            <person name="Sadaie Y."/>
            <person name="Sato T."/>
            <person name="Scanlan E."/>
            <person name="Schleich S."/>
            <person name="Schroeter R."/>
            <person name="Scoffone F."/>
            <person name="Sekiguchi J."/>
            <person name="Sekowska A."/>
            <person name="Seror S.J."/>
            <person name="Serror P."/>
            <person name="Shin B.-S."/>
            <person name="Soldo B."/>
            <person name="Sorokin A."/>
            <person name="Tacconi E."/>
            <person name="Takagi T."/>
            <person name="Takahashi H."/>
            <person name="Takemaru K."/>
            <person name="Takeuchi M."/>
            <person name="Tamakoshi A."/>
            <person name="Tanaka T."/>
            <person name="Terpstra P."/>
            <person name="Tognoni A."/>
            <person name="Tosato V."/>
            <person name="Uchiyama S."/>
            <person name="Vandenbol M."/>
            <person name="Vannier F."/>
            <person name="Vassarotti A."/>
            <person name="Viari A."/>
            <person name="Wambutt R."/>
            <person name="Wedler E."/>
            <person name="Wedler H."/>
            <person name="Weitzenegger T."/>
            <person name="Winters P."/>
            <person name="Wipat A."/>
            <person name="Yamamoto H."/>
            <person name="Yamane K."/>
            <person name="Yasumoto K."/>
            <person name="Yata K."/>
            <person name="Yoshida K."/>
            <person name="Yoshikawa H.-F."/>
            <person name="Zumstein E."/>
            <person name="Yoshikawa H."/>
            <person name="Danchin A."/>
        </authorList>
    </citation>
    <scope>NUCLEOTIDE SEQUENCE [LARGE SCALE GENOMIC DNA]</scope>
    <source>
        <strain>168</strain>
    </source>
</reference>
<reference key="4">
    <citation type="journal article" date="2009" name="Microbiology">
        <title>From a consortium sequence to a unified sequence: the Bacillus subtilis 168 reference genome a decade later.</title>
        <authorList>
            <person name="Barbe V."/>
            <person name="Cruveiller S."/>
            <person name="Kunst F."/>
            <person name="Lenoble P."/>
            <person name="Meurice G."/>
            <person name="Sekowska A."/>
            <person name="Vallenet D."/>
            <person name="Wang T."/>
            <person name="Moszer I."/>
            <person name="Medigue C."/>
            <person name="Danchin A."/>
        </authorList>
    </citation>
    <scope>SEQUENCE REVISION TO 248</scope>
</reference>
<name>YXAM_BACSU</name>
<gene>
    <name type="primary">yxaM</name>
    <name type="ordered locus">BSU39930</name>
    <name type="ORF">S14MR</name>
</gene>
<feature type="chain" id="PRO_0000050003" description="Uncharacterized MFS-type transporter YxaM">
    <location>
        <begin position="1"/>
        <end position="399"/>
    </location>
</feature>
<feature type="transmembrane region" description="Helical" evidence="1">
    <location>
        <begin position="7"/>
        <end position="27"/>
    </location>
</feature>
<feature type="transmembrane region" description="Helical" evidence="1">
    <location>
        <begin position="33"/>
        <end position="53"/>
    </location>
</feature>
<feature type="transmembrane region" description="Helical" evidence="1">
    <location>
        <begin position="79"/>
        <end position="99"/>
    </location>
</feature>
<feature type="transmembrane region" description="Helical" evidence="1">
    <location>
        <begin position="131"/>
        <end position="151"/>
    </location>
</feature>
<feature type="transmembrane region" description="Helical" evidence="1">
    <location>
        <begin position="153"/>
        <end position="173"/>
    </location>
</feature>
<feature type="transmembrane region" description="Helical" evidence="1">
    <location>
        <begin position="208"/>
        <end position="228"/>
    </location>
</feature>
<feature type="transmembrane region" description="Helical" evidence="1">
    <location>
        <begin position="242"/>
        <end position="262"/>
    </location>
</feature>
<feature type="transmembrane region" description="Helical" evidence="1">
    <location>
        <begin position="296"/>
        <end position="316"/>
    </location>
</feature>
<feature type="transmembrane region" description="Helical" evidence="1">
    <location>
        <begin position="335"/>
        <end position="355"/>
    </location>
</feature>
<feature type="transmembrane region" description="Helical" evidence="1">
    <location>
        <begin position="357"/>
        <end position="377"/>
    </location>
</feature>
<feature type="sequence conflict" description="In Ref. 1; BAA21592." evidence="2" ref="1">
    <original>A</original>
    <variation>P</variation>
    <location>
        <position position="248"/>
    </location>
</feature>
<comment type="subcellular location">
    <subcellularLocation>
        <location evidence="2">Cell membrane</location>
        <topology evidence="2">Multi-pass membrane protein</topology>
    </subcellularLocation>
</comment>
<comment type="similarity">
    <text evidence="2">Belongs to the major facilitator superfamily. Drug:H(+) antiporter-3 (DHA3) (TC 2.A.1.21) family.</text>
</comment>
<protein>
    <recommendedName>
        <fullName>Uncharacterized MFS-type transporter YxaM</fullName>
    </recommendedName>
</protein>
<dbReference type="EMBL" id="AB005554">
    <property type="protein sequence ID" value="BAA21592.1"/>
    <property type="molecule type" value="Genomic_DNA"/>
</dbReference>
<dbReference type="EMBL" id="AL009126">
    <property type="protein sequence ID" value="CAB16029.2"/>
    <property type="molecule type" value="Genomic_DNA"/>
</dbReference>
<dbReference type="PIR" id="D70072">
    <property type="entry name" value="D70072"/>
</dbReference>
<dbReference type="RefSeq" id="NP_391872.2">
    <property type="nucleotide sequence ID" value="NC_000964.3"/>
</dbReference>
<dbReference type="RefSeq" id="WP_003244232.1">
    <property type="nucleotide sequence ID" value="NZ_OZ025638.1"/>
</dbReference>
<dbReference type="SMR" id="P42112"/>
<dbReference type="FunCoup" id="P42112">
    <property type="interactions" value="34"/>
</dbReference>
<dbReference type="STRING" id="224308.BSU39930"/>
<dbReference type="TCDB" id="2.A.1.21.17">
    <property type="family name" value="the major facilitator superfamily (mfs)"/>
</dbReference>
<dbReference type="PaxDb" id="224308-BSU39930"/>
<dbReference type="EnsemblBacteria" id="CAB16029">
    <property type="protein sequence ID" value="CAB16029"/>
    <property type="gene ID" value="BSU_39930"/>
</dbReference>
<dbReference type="GeneID" id="937678"/>
<dbReference type="KEGG" id="bsu:BSU39930"/>
<dbReference type="PATRIC" id="fig|224308.179.peg.4319"/>
<dbReference type="eggNOG" id="COG2814">
    <property type="taxonomic scope" value="Bacteria"/>
</dbReference>
<dbReference type="InParanoid" id="P42112"/>
<dbReference type="OrthoDB" id="9816124at2"/>
<dbReference type="BioCyc" id="BSUB:BSU39930-MONOMER"/>
<dbReference type="Proteomes" id="UP000001570">
    <property type="component" value="Chromosome"/>
</dbReference>
<dbReference type="GO" id="GO:0005886">
    <property type="term" value="C:plasma membrane"/>
    <property type="evidence" value="ECO:0007669"/>
    <property type="project" value="UniProtKB-SubCell"/>
</dbReference>
<dbReference type="GO" id="GO:0022857">
    <property type="term" value="F:transmembrane transporter activity"/>
    <property type="evidence" value="ECO:0007669"/>
    <property type="project" value="InterPro"/>
</dbReference>
<dbReference type="CDD" id="cd06174">
    <property type="entry name" value="MFS"/>
    <property type="match status" value="1"/>
</dbReference>
<dbReference type="Gene3D" id="1.20.1250.20">
    <property type="entry name" value="MFS general substrate transporter like domains"/>
    <property type="match status" value="1"/>
</dbReference>
<dbReference type="InterPro" id="IPR011701">
    <property type="entry name" value="MFS"/>
</dbReference>
<dbReference type="InterPro" id="IPR053160">
    <property type="entry name" value="MFS_DHA3_Transporter"/>
</dbReference>
<dbReference type="InterPro" id="IPR020846">
    <property type="entry name" value="MFS_dom"/>
</dbReference>
<dbReference type="InterPro" id="IPR036259">
    <property type="entry name" value="MFS_trans_sf"/>
</dbReference>
<dbReference type="PANTHER" id="PTHR23530:SF1">
    <property type="entry name" value="PERMEASE, MAJOR FACILITATOR SUPERFAMILY-RELATED"/>
    <property type="match status" value="1"/>
</dbReference>
<dbReference type="PANTHER" id="PTHR23530">
    <property type="entry name" value="TRANSPORT PROTEIN-RELATED"/>
    <property type="match status" value="1"/>
</dbReference>
<dbReference type="Pfam" id="PF07690">
    <property type="entry name" value="MFS_1"/>
    <property type="match status" value="1"/>
</dbReference>
<dbReference type="SUPFAM" id="SSF103473">
    <property type="entry name" value="MFS general substrate transporter"/>
    <property type="match status" value="1"/>
</dbReference>
<dbReference type="PROSITE" id="PS50850">
    <property type="entry name" value="MFS"/>
    <property type="match status" value="1"/>
</dbReference>
<accession>P42112</accession>
<evidence type="ECO:0000255" key="1"/>
<evidence type="ECO:0000305" key="2"/>
<proteinExistence type="inferred from homology"/>
<sequence length="399" mass="44720">MSIFYSFSALRGLAMGIFSPIWILYLISKDYDFLQIGLMGAVLEIAKLIFEVPSGVFADRYGIKISIASSFFFSILTWAFFPFIDSAAICILAMIIWALSDSLISGSFETWMSRVAGEDRFGKEMMKNTQLLITFLIIGSIASGYLYSLNIYFPFLLVMVIYLLLFIWMSVFIKVPSVSETNHGDQNQHDSIKIIKESLKIIFNKKRVLLIVIAGFFTATAYDTISRYWQPFLSDLGFSEKSLGYIFALGGFTALVLLTLTIRFEKKIEKNPYLALTSLDSMGMVMTFLLSRAFRPLGIPCTAFLLAIEDIHHPIVTSYLNKFFPDSYKNTLFSLNSGVGAIGEILSGVIFGIISAAFGLSAMFVVVAVFLLIPIILYTIVPKIKDNDMKVQIEKSQQV</sequence>